<name>ILVC_BRUMB</name>
<accession>C0RE20</accession>
<dbReference type="EC" id="1.1.1.86" evidence="1"/>
<dbReference type="EMBL" id="CP001488">
    <property type="protein sequence ID" value="ACO01142.1"/>
    <property type="molecule type" value="Genomic_DNA"/>
</dbReference>
<dbReference type="RefSeq" id="WP_004683995.1">
    <property type="nucleotide sequence ID" value="NC_012441.1"/>
</dbReference>
<dbReference type="SMR" id="C0RE20"/>
<dbReference type="GeneID" id="29593410"/>
<dbReference type="KEGG" id="bmi:BMEA_A1427"/>
<dbReference type="HOGENOM" id="CLU_033821_0_1_5"/>
<dbReference type="UniPathway" id="UPA00047">
    <property type="reaction ID" value="UER00056"/>
</dbReference>
<dbReference type="UniPathway" id="UPA00049">
    <property type="reaction ID" value="UER00060"/>
</dbReference>
<dbReference type="PRO" id="PR:C0RE20"/>
<dbReference type="Proteomes" id="UP000001748">
    <property type="component" value="Chromosome I"/>
</dbReference>
<dbReference type="GO" id="GO:0005829">
    <property type="term" value="C:cytosol"/>
    <property type="evidence" value="ECO:0007669"/>
    <property type="project" value="TreeGrafter"/>
</dbReference>
<dbReference type="GO" id="GO:0004455">
    <property type="term" value="F:ketol-acid reductoisomerase activity"/>
    <property type="evidence" value="ECO:0007669"/>
    <property type="project" value="UniProtKB-UniRule"/>
</dbReference>
<dbReference type="GO" id="GO:0000287">
    <property type="term" value="F:magnesium ion binding"/>
    <property type="evidence" value="ECO:0007669"/>
    <property type="project" value="UniProtKB-UniRule"/>
</dbReference>
<dbReference type="GO" id="GO:0050661">
    <property type="term" value="F:NADP binding"/>
    <property type="evidence" value="ECO:0007669"/>
    <property type="project" value="InterPro"/>
</dbReference>
<dbReference type="GO" id="GO:0009097">
    <property type="term" value="P:isoleucine biosynthetic process"/>
    <property type="evidence" value="ECO:0007669"/>
    <property type="project" value="UniProtKB-UniRule"/>
</dbReference>
<dbReference type="GO" id="GO:0009099">
    <property type="term" value="P:L-valine biosynthetic process"/>
    <property type="evidence" value="ECO:0007669"/>
    <property type="project" value="UniProtKB-UniRule"/>
</dbReference>
<dbReference type="FunFam" id="3.40.50.720:FF:000023">
    <property type="entry name" value="Ketol-acid reductoisomerase (NADP(+))"/>
    <property type="match status" value="1"/>
</dbReference>
<dbReference type="Gene3D" id="6.10.240.10">
    <property type="match status" value="1"/>
</dbReference>
<dbReference type="Gene3D" id="3.40.50.720">
    <property type="entry name" value="NAD(P)-binding Rossmann-like Domain"/>
    <property type="match status" value="1"/>
</dbReference>
<dbReference type="HAMAP" id="MF_00435">
    <property type="entry name" value="IlvC"/>
    <property type="match status" value="1"/>
</dbReference>
<dbReference type="InterPro" id="IPR008927">
    <property type="entry name" value="6-PGluconate_DH-like_C_sf"/>
</dbReference>
<dbReference type="InterPro" id="IPR013023">
    <property type="entry name" value="KARI"/>
</dbReference>
<dbReference type="InterPro" id="IPR000506">
    <property type="entry name" value="KARI_C"/>
</dbReference>
<dbReference type="InterPro" id="IPR013116">
    <property type="entry name" value="KARI_N"/>
</dbReference>
<dbReference type="InterPro" id="IPR014359">
    <property type="entry name" value="KARI_prok"/>
</dbReference>
<dbReference type="InterPro" id="IPR036291">
    <property type="entry name" value="NAD(P)-bd_dom_sf"/>
</dbReference>
<dbReference type="NCBIfam" id="TIGR00465">
    <property type="entry name" value="ilvC"/>
    <property type="match status" value="1"/>
</dbReference>
<dbReference type="NCBIfam" id="NF004017">
    <property type="entry name" value="PRK05479.1"/>
    <property type="match status" value="1"/>
</dbReference>
<dbReference type="NCBIfam" id="NF009940">
    <property type="entry name" value="PRK13403.1"/>
    <property type="match status" value="1"/>
</dbReference>
<dbReference type="PANTHER" id="PTHR21371">
    <property type="entry name" value="KETOL-ACID REDUCTOISOMERASE, MITOCHONDRIAL"/>
    <property type="match status" value="1"/>
</dbReference>
<dbReference type="PANTHER" id="PTHR21371:SF1">
    <property type="entry name" value="KETOL-ACID REDUCTOISOMERASE, MITOCHONDRIAL"/>
    <property type="match status" value="1"/>
</dbReference>
<dbReference type="Pfam" id="PF01450">
    <property type="entry name" value="KARI_C"/>
    <property type="match status" value="1"/>
</dbReference>
<dbReference type="Pfam" id="PF07991">
    <property type="entry name" value="KARI_N"/>
    <property type="match status" value="1"/>
</dbReference>
<dbReference type="PIRSF" id="PIRSF000116">
    <property type="entry name" value="IlvC_gammaproteo"/>
    <property type="match status" value="1"/>
</dbReference>
<dbReference type="SUPFAM" id="SSF48179">
    <property type="entry name" value="6-phosphogluconate dehydrogenase C-terminal domain-like"/>
    <property type="match status" value="1"/>
</dbReference>
<dbReference type="SUPFAM" id="SSF51735">
    <property type="entry name" value="NAD(P)-binding Rossmann-fold domains"/>
    <property type="match status" value="1"/>
</dbReference>
<dbReference type="PROSITE" id="PS51851">
    <property type="entry name" value="KARI_C"/>
    <property type="match status" value="1"/>
</dbReference>
<dbReference type="PROSITE" id="PS51850">
    <property type="entry name" value="KARI_N"/>
    <property type="match status" value="1"/>
</dbReference>
<feature type="chain" id="PRO_1000190916" description="Ketol-acid reductoisomerase (NADP(+))">
    <location>
        <begin position="1"/>
        <end position="339"/>
    </location>
</feature>
<feature type="domain" description="KARI N-terminal Rossmann" evidence="2">
    <location>
        <begin position="1"/>
        <end position="182"/>
    </location>
</feature>
<feature type="domain" description="KARI C-terminal knotted" evidence="3">
    <location>
        <begin position="183"/>
        <end position="328"/>
    </location>
</feature>
<feature type="active site" evidence="1">
    <location>
        <position position="108"/>
    </location>
</feature>
<feature type="binding site" evidence="1">
    <location>
        <begin position="24"/>
        <end position="27"/>
    </location>
    <ligand>
        <name>NADP(+)</name>
        <dbReference type="ChEBI" id="CHEBI:58349"/>
    </ligand>
</feature>
<feature type="binding site" evidence="1">
    <location>
        <position position="48"/>
    </location>
    <ligand>
        <name>NADP(+)</name>
        <dbReference type="ChEBI" id="CHEBI:58349"/>
    </ligand>
</feature>
<feature type="binding site" evidence="1">
    <location>
        <position position="51"/>
    </location>
    <ligand>
        <name>NADP(+)</name>
        <dbReference type="ChEBI" id="CHEBI:58349"/>
    </ligand>
</feature>
<feature type="binding site" evidence="1">
    <location>
        <position position="53"/>
    </location>
    <ligand>
        <name>NADP(+)</name>
        <dbReference type="ChEBI" id="CHEBI:58349"/>
    </ligand>
</feature>
<feature type="binding site" evidence="1">
    <location>
        <begin position="83"/>
        <end position="86"/>
    </location>
    <ligand>
        <name>NADP(+)</name>
        <dbReference type="ChEBI" id="CHEBI:58349"/>
    </ligand>
</feature>
<feature type="binding site" evidence="1">
    <location>
        <position position="134"/>
    </location>
    <ligand>
        <name>NADP(+)</name>
        <dbReference type="ChEBI" id="CHEBI:58349"/>
    </ligand>
</feature>
<feature type="binding site" evidence="1">
    <location>
        <position position="191"/>
    </location>
    <ligand>
        <name>Mg(2+)</name>
        <dbReference type="ChEBI" id="CHEBI:18420"/>
        <label>1</label>
    </ligand>
</feature>
<feature type="binding site" evidence="1">
    <location>
        <position position="191"/>
    </location>
    <ligand>
        <name>Mg(2+)</name>
        <dbReference type="ChEBI" id="CHEBI:18420"/>
        <label>2</label>
    </ligand>
</feature>
<feature type="binding site" evidence="1">
    <location>
        <position position="195"/>
    </location>
    <ligand>
        <name>Mg(2+)</name>
        <dbReference type="ChEBI" id="CHEBI:18420"/>
        <label>1</label>
    </ligand>
</feature>
<feature type="binding site" evidence="1">
    <location>
        <position position="227"/>
    </location>
    <ligand>
        <name>Mg(2+)</name>
        <dbReference type="ChEBI" id="CHEBI:18420"/>
        <label>2</label>
    </ligand>
</feature>
<feature type="binding site" evidence="1">
    <location>
        <position position="231"/>
    </location>
    <ligand>
        <name>Mg(2+)</name>
        <dbReference type="ChEBI" id="CHEBI:18420"/>
        <label>2</label>
    </ligand>
</feature>
<feature type="binding site" evidence="1">
    <location>
        <position position="252"/>
    </location>
    <ligand>
        <name>substrate</name>
    </ligand>
</feature>
<organism>
    <name type="scientific">Brucella melitensis biotype 2 (strain ATCC 23457)</name>
    <dbReference type="NCBI Taxonomy" id="546272"/>
    <lineage>
        <taxon>Bacteria</taxon>
        <taxon>Pseudomonadati</taxon>
        <taxon>Pseudomonadota</taxon>
        <taxon>Alphaproteobacteria</taxon>
        <taxon>Hyphomicrobiales</taxon>
        <taxon>Brucellaceae</taxon>
        <taxon>Brucella/Ochrobactrum group</taxon>
        <taxon>Brucella</taxon>
    </lineage>
</organism>
<protein>
    <recommendedName>
        <fullName evidence="1">Ketol-acid reductoisomerase (NADP(+))</fullName>
        <shortName evidence="1">KARI</shortName>
        <ecNumber evidence="1">1.1.1.86</ecNumber>
    </recommendedName>
    <alternativeName>
        <fullName evidence="1">Acetohydroxy-acid isomeroreductase</fullName>
        <shortName evidence="1">AHIR</shortName>
    </alternativeName>
    <alternativeName>
        <fullName evidence="1">Alpha-keto-beta-hydroxylacyl reductoisomerase</fullName>
    </alternativeName>
    <alternativeName>
        <fullName evidence="1">Ketol-acid reductoisomerase type 1</fullName>
    </alternativeName>
    <alternativeName>
        <fullName evidence="1">Ketol-acid reductoisomerase type I</fullName>
    </alternativeName>
</protein>
<comment type="function">
    <text evidence="1">Involved in the biosynthesis of branched-chain amino acids (BCAA). Catalyzes an alkyl-migration followed by a ketol-acid reduction of (S)-2-acetolactate (S2AL) to yield (R)-2,3-dihydroxy-isovalerate. In the isomerase reaction, S2AL is rearranged via a Mg-dependent methyl migration to produce 3-hydroxy-3-methyl-2-ketobutyrate (HMKB). In the reductase reaction, this 2-ketoacid undergoes a metal-dependent reduction by NADPH to yield (R)-2,3-dihydroxy-isovalerate.</text>
</comment>
<comment type="catalytic activity">
    <reaction evidence="1">
        <text>(2R)-2,3-dihydroxy-3-methylbutanoate + NADP(+) = (2S)-2-acetolactate + NADPH + H(+)</text>
        <dbReference type="Rhea" id="RHEA:22068"/>
        <dbReference type="ChEBI" id="CHEBI:15378"/>
        <dbReference type="ChEBI" id="CHEBI:49072"/>
        <dbReference type="ChEBI" id="CHEBI:57783"/>
        <dbReference type="ChEBI" id="CHEBI:58349"/>
        <dbReference type="ChEBI" id="CHEBI:58476"/>
        <dbReference type="EC" id="1.1.1.86"/>
    </reaction>
</comment>
<comment type="catalytic activity">
    <reaction evidence="1">
        <text>(2R,3R)-2,3-dihydroxy-3-methylpentanoate + NADP(+) = (S)-2-ethyl-2-hydroxy-3-oxobutanoate + NADPH + H(+)</text>
        <dbReference type="Rhea" id="RHEA:13493"/>
        <dbReference type="ChEBI" id="CHEBI:15378"/>
        <dbReference type="ChEBI" id="CHEBI:49256"/>
        <dbReference type="ChEBI" id="CHEBI:49258"/>
        <dbReference type="ChEBI" id="CHEBI:57783"/>
        <dbReference type="ChEBI" id="CHEBI:58349"/>
        <dbReference type="EC" id="1.1.1.86"/>
    </reaction>
</comment>
<comment type="cofactor">
    <cofactor evidence="1">
        <name>Mg(2+)</name>
        <dbReference type="ChEBI" id="CHEBI:18420"/>
    </cofactor>
    <text evidence="1">Binds 2 magnesium ions per subunit.</text>
</comment>
<comment type="pathway">
    <text evidence="1">Amino-acid biosynthesis; L-isoleucine biosynthesis; L-isoleucine from 2-oxobutanoate: step 2/4.</text>
</comment>
<comment type="pathway">
    <text evidence="1">Amino-acid biosynthesis; L-valine biosynthesis; L-valine from pyruvate: step 2/4.</text>
</comment>
<comment type="similarity">
    <text evidence="1">Belongs to the ketol-acid reductoisomerase family.</text>
</comment>
<proteinExistence type="inferred from homology"/>
<sequence>MRVYYDRDADVNLIKSKKVVIVGYGSQGRAHALNLKDSGAANVRVALREGSATVQKAQADGFEVMNVADAAKWADLMMMATPDELQADIYRDHIHNNLRDGAAIAFAHGLNVHCGLIEPKKTVDVMMIAPKGPGHTVRGEYQKGGGVPCLIAIHQDASGNAHDLALSYASGVGGGRSGVIETTFKEECETDLFGEQAVLCGGVVELIRTGFEVLVEAGYAPEMAYFECLNEMKLIVDLIYEGGIANMNYSISNTAEWGEYVTGPRIITAETKAEMKRVLKDIQTGKFTSDWMQEWKAGAARFKGIRRLNDAHQIEEVGGKLRAMMPWIEKNKLVDKARN</sequence>
<reference key="1">
    <citation type="submission" date="2009-03" db="EMBL/GenBank/DDBJ databases">
        <title>Brucella melitensis ATCC 23457 whole genome shotgun sequencing project.</title>
        <authorList>
            <person name="Setubal J.C."/>
            <person name="Boyle S."/>
            <person name="Crasta O.R."/>
            <person name="Gillespie J.J."/>
            <person name="Kenyon R.W."/>
            <person name="Lu J."/>
            <person name="Mane S."/>
            <person name="Nagrani S."/>
            <person name="Shallom J.M."/>
            <person name="Shallom S."/>
            <person name="Shukla M."/>
            <person name="Snyder E.E."/>
            <person name="Sobral B.W."/>
            <person name="Wattam A.R."/>
            <person name="Will R."/>
            <person name="Williams K."/>
            <person name="Yoo H."/>
            <person name="Munk C."/>
            <person name="Tapia R."/>
            <person name="Han C."/>
            <person name="Detter J.C."/>
            <person name="Bruce D."/>
            <person name="Brettin T.S."/>
        </authorList>
    </citation>
    <scope>NUCLEOTIDE SEQUENCE [LARGE SCALE GENOMIC DNA]</scope>
    <source>
        <strain>ATCC 23457</strain>
    </source>
</reference>
<gene>
    <name evidence="1" type="primary">ilvC</name>
    <name type="ordered locus">BMEA_A1427</name>
</gene>
<evidence type="ECO:0000255" key="1">
    <source>
        <dbReference type="HAMAP-Rule" id="MF_00435"/>
    </source>
</evidence>
<evidence type="ECO:0000255" key="2">
    <source>
        <dbReference type="PROSITE-ProRule" id="PRU01197"/>
    </source>
</evidence>
<evidence type="ECO:0000255" key="3">
    <source>
        <dbReference type="PROSITE-ProRule" id="PRU01198"/>
    </source>
</evidence>
<keyword id="KW-0028">Amino-acid biosynthesis</keyword>
<keyword id="KW-0100">Branched-chain amino acid biosynthesis</keyword>
<keyword id="KW-0460">Magnesium</keyword>
<keyword id="KW-0479">Metal-binding</keyword>
<keyword id="KW-0521">NADP</keyword>
<keyword id="KW-0560">Oxidoreductase</keyword>